<accession>P0A3U4</accession>
<accession>Q45322</accession>
<sequence>MKSVILASIAAMFATSAMAADVVVSEPSAPTAAPVDTFSWTGGYIGINAGYAGGKFKHPFSSFDKEDNEQVSGSLDVTAGGFVGGVQAGYNWQLDNGVVLGAETDFQGSSVTGSISAGASGLEGKAETKVEWFGTVRARLGYTATERLMVYGTGGLAYGKVKSAFNLGDDASALHTWSDKTKAGWTLGAGAEYAINNNWTLKSEYLYTDLGKRNLVDVDNSFLESKVNFHTVRVGLNYKF</sequence>
<evidence type="ECO:0000255" key="1"/>
<evidence type="ECO:0000305" key="2"/>
<feature type="signal peptide" evidence="1">
    <location>
        <begin position="1"/>
        <end position="19"/>
    </location>
</feature>
<feature type="chain" id="PRO_0000021884" description="31 kDa outer-membrane immunogenic protein">
    <location>
        <begin position="20"/>
        <end position="240"/>
    </location>
</feature>
<feature type="region of interest" description="Epitope recognized by the monoclonal antibody A59/10F09/G10">
    <location>
        <begin position="48"/>
        <end position="83"/>
    </location>
</feature>
<dbReference type="EMBL" id="AF076290">
    <property type="protein sequence ID" value="AAB36693.1"/>
    <property type="molecule type" value="Genomic_DNA"/>
</dbReference>
<dbReference type="EMBL" id="AE008918">
    <property type="protein sequence ID" value="AAL54086.1"/>
    <property type="status" value="ALT_INIT"/>
    <property type="molecule type" value="Genomic_DNA"/>
</dbReference>
<dbReference type="PIR" id="AC3615">
    <property type="entry name" value="AC3615"/>
</dbReference>
<dbReference type="RefSeq" id="WP_004681766.1">
    <property type="nucleotide sequence ID" value="NZ_GG703779.1"/>
</dbReference>
<dbReference type="TCDB" id="1.B.4.2.15">
    <property type="family name" value="the brucella-rhizobium porin (brp) family"/>
</dbReference>
<dbReference type="GeneID" id="97535431"/>
<dbReference type="KEGG" id="bme:BMEII0844"/>
<dbReference type="KEGG" id="bmel:DK63_2404"/>
<dbReference type="PATRIC" id="fig|224914.52.peg.2520"/>
<dbReference type="eggNOG" id="COG3637">
    <property type="taxonomic scope" value="Bacteria"/>
</dbReference>
<dbReference type="Proteomes" id="UP000000419">
    <property type="component" value="Chromosome II"/>
</dbReference>
<dbReference type="GO" id="GO:0009279">
    <property type="term" value="C:cell outer membrane"/>
    <property type="evidence" value="ECO:0007669"/>
    <property type="project" value="UniProtKB-SubCell"/>
</dbReference>
<dbReference type="GO" id="GO:0046930">
    <property type="term" value="C:pore complex"/>
    <property type="evidence" value="ECO:0007669"/>
    <property type="project" value="UniProtKB-KW"/>
</dbReference>
<dbReference type="GO" id="GO:0015288">
    <property type="term" value="F:porin activity"/>
    <property type="evidence" value="ECO:0007669"/>
    <property type="project" value="UniProtKB-KW"/>
</dbReference>
<dbReference type="GO" id="GO:0006811">
    <property type="term" value="P:monoatomic ion transport"/>
    <property type="evidence" value="ECO:0007669"/>
    <property type="project" value="UniProtKB-KW"/>
</dbReference>
<dbReference type="Gene3D" id="2.40.160.20">
    <property type="match status" value="1"/>
</dbReference>
<dbReference type="InterPro" id="IPR051692">
    <property type="entry name" value="OMP-like"/>
</dbReference>
<dbReference type="InterPro" id="IPR011250">
    <property type="entry name" value="OMP/PagP_b-brl"/>
</dbReference>
<dbReference type="InterPro" id="IPR027385">
    <property type="entry name" value="OMP_b-brl"/>
</dbReference>
<dbReference type="PANTHER" id="PTHR34001">
    <property type="entry name" value="BLL7405 PROTEIN"/>
    <property type="match status" value="1"/>
</dbReference>
<dbReference type="PANTHER" id="PTHR34001:SF3">
    <property type="entry name" value="BLL7405 PROTEIN"/>
    <property type="match status" value="1"/>
</dbReference>
<dbReference type="Pfam" id="PF13505">
    <property type="entry name" value="OMP_b-brl"/>
    <property type="match status" value="1"/>
</dbReference>
<dbReference type="SUPFAM" id="SSF56925">
    <property type="entry name" value="OMPA-like"/>
    <property type="match status" value="1"/>
</dbReference>
<keyword id="KW-0998">Cell outer membrane</keyword>
<keyword id="KW-0406">Ion transport</keyword>
<keyword id="KW-0472">Membrane</keyword>
<keyword id="KW-0626">Porin</keyword>
<keyword id="KW-0732">Signal</keyword>
<keyword id="KW-0812">Transmembrane</keyword>
<keyword id="KW-1134">Transmembrane beta strand</keyword>
<keyword id="KW-0813">Transport</keyword>
<protein>
    <recommendedName>
        <fullName>31 kDa outer-membrane immunogenic protein</fullName>
    </recommendedName>
</protein>
<reference key="1">
    <citation type="journal article" date="1996" name="Infect. Immun.">
        <title>Cloning, nucleotide sequence, and expression of the Brucella melitensis omp31 gene coding for an immunogenic major outer membrane protein.</title>
        <authorList>
            <person name="Vizcaino N."/>
            <person name="Cloeckaert A."/>
            <person name="Zygmunt M.S."/>
            <person name="Dubray G."/>
        </authorList>
    </citation>
    <scope>NUCLEOTIDE SEQUENCE [GENOMIC DNA]</scope>
    <source>
        <strain>ATCC 23456 / CCUG 17765 / NCTC 10094 / 16M</strain>
    </source>
</reference>
<reference key="2">
    <citation type="journal article" date="2002" name="Proc. Natl. Acad. Sci. U.S.A.">
        <title>The genome sequence of the facultative intracellular pathogen Brucella melitensis.</title>
        <authorList>
            <person name="DelVecchio V.G."/>
            <person name="Kapatral V."/>
            <person name="Redkar R.J."/>
            <person name="Patra G."/>
            <person name="Mujer C."/>
            <person name="Los T."/>
            <person name="Ivanova N."/>
            <person name="Anderson I."/>
            <person name="Bhattacharyya A."/>
            <person name="Lykidis A."/>
            <person name="Reznik G."/>
            <person name="Jablonski L."/>
            <person name="Larsen N."/>
            <person name="D'Souza M."/>
            <person name="Bernal A."/>
            <person name="Mazur M."/>
            <person name="Goltsman E."/>
            <person name="Selkov E."/>
            <person name="Elzer P.H."/>
            <person name="Hagius S."/>
            <person name="O'Callaghan D."/>
            <person name="Letesson J.-J."/>
            <person name="Haselkorn R."/>
            <person name="Kyrpides N.C."/>
            <person name="Overbeek R."/>
        </authorList>
    </citation>
    <scope>NUCLEOTIDE SEQUENCE [LARGE SCALE GENOMIC DNA]</scope>
    <source>
        <strain>ATCC 23456 / CCUG 17765 / NCTC 10094 / 16M</strain>
    </source>
</reference>
<gene>
    <name type="primary">omp31</name>
    <name type="ordered locus">BMEII0844</name>
</gene>
<name>OM31_BRUME</name>
<proteinExistence type="inferred from homology"/>
<comment type="function">
    <text>Major outer membrane protein associated with peptidoglycans. May function as a porin.</text>
</comment>
<comment type="subunit">
    <text>Oligomeric.</text>
</comment>
<comment type="subcellular location">
    <subcellularLocation>
        <location>Cell outer membrane</location>
    </subcellularLocation>
</comment>
<comment type="similarity">
    <text evidence="2">Belongs to the Omp25/RopB family.</text>
</comment>
<comment type="sequence caution" evidence="2">
    <conflict type="erroneous initiation">
        <sequence resource="EMBL-CDS" id="AAL54086"/>
    </conflict>
</comment>
<organism>
    <name type="scientific">Brucella melitensis biotype 1 (strain ATCC 23456 / CCUG 17765 / NCTC 10094 / 16M)</name>
    <dbReference type="NCBI Taxonomy" id="224914"/>
    <lineage>
        <taxon>Bacteria</taxon>
        <taxon>Pseudomonadati</taxon>
        <taxon>Pseudomonadota</taxon>
        <taxon>Alphaproteobacteria</taxon>
        <taxon>Hyphomicrobiales</taxon>
        <taxon>Brucellaceae</taxon>
        <taxon>Brucella/Ochrobactrum group</taxon>
        <taxon>Brucella</taxon>
    </lineage>
</organism>